<gene>
    <name evidence="1" type="primary">tig</name>
    <name type="ordered locus">SCO2620</name>
    <name type="ORF">SCC80.05c</name>
</gene>
<name>TIG_STRCO</name>
<keyword id="KW-0131">Cell cycle</keyword>
<keyword id="KW-0132">Cell division</keyword>
<keyword id="KW-0143">Chaperone</keyword>
<keyword id="KW-0963">Cytoplasm</keyword>
<keyword id="KW-0413">Isomerase</keyword>
<keyword id="KW-1185">Reference proteome</keyword>
<keyword id="KW-0697">Rotamase</keyword>
<organism>
    <name type="scientific">Streptomyces coelicolor (strain ATCC BAA-471 / A3(2) / M145)</name>
    <dbReference type="NCBI Taxonomy" id="100226"/>
    <lineage>
        <taxon>Bacteria</taxon>
        <taxon>Bacillati</taxon>
        <taxon>Actinomycetota</taxon>
        <taxon>Actinomycetes</taxon>
        <taxon>Kitasatosporales</taxon>
        <taxon>Streptomycetaceae</taxon>
        <taxon>Streptomyces</taxon>
        <taxon>Streptomyces albidoflavus group</taxon>
    </lineage>
</organism>
<feature type="chain" id="PRO_0000179436" description="Trigger factor">
    <location>
        <begin position="1"/>
        <end position="468"/>
    </location>
</feature>
<feature type="domain" description="PPIase FKBP-type" evidence="1">
    <location>
        <begin position="162"/>
        <end position="243"/>
    </location>
</feature>
<feature type="region of interest" description="Disordered" evidence="2">
    <location>
        <begin position="428"/>
        <end position="468"/>
    </location>
</feature>
<feature type="compositionally biased region" description="Acidic residues" evidence="2">
    <location>
        <begin position="432"/>
        <end position="453"/>
    </location>
</feature>
<feature type="compositionally biased region" description="Basic and acidic residues" evidence="2">
    <location>
        <begin position="454"/>
        <end position="468"/>
    </location>
</feature>
<reference key="1">
    <citation type="journal article" date="2002" name="Nature">
        <title>Complete genome sequence of the model actinomycete Streptomyces coelicolor A3(2).</title>
        <authorList>
            <person name="Bentley S.D."/>
            <person name="Chater K.F."/>
            <person name="Cerdeno-Tarraga A.-M."/>
            <person name="Challis G.L."/>
            <person name="Thomson N.R."/>
            <person name="James K.D."/>
            <person name="Harris D.E."/>
            <person name="Quail M.A."/>
            <person name="Kieser H."/>
            <person name="Harper D."/>
            <person name="Bateman A."/>
            <person name="Brown S."/>
            <person name="Chandra G."/>
            <person name="Chen C.W."/>
            <person name="Collins M."/>
            <person name="Cronin A."/>
            <person name="Fraser A."/>
            <person name="Goble A."/>
            <person name="Hidalgo J."/>
            <person name="Hornsby T."/>
            <person name="Howarth S."/>
            <person name="Huang C.-H."/>
            <person name="Kieser T."/>
            <person name="Larke L."/>
            <person name="Murphy L.D."/>
            <person name="Oliver K."/>
            <person name="O'Neil S."/>
            <person name="Rabbinowitsch E."/>
            <person name="Rajandream M.A."/>
            <person name="Rutherford K.M."/>
            <person name="Rutter S."/>
            <person name="Seeger K."/>
            <person name="Saunders D."/>
            <person name="Sharp S."/>
            <person name="Squares R."/>
            <person name="Squares S."/>
            <person name="Taylor K."/>
            <person name="Warren T."/>
            <person name="Wietzorrek A."/>
            <person name="Woodward J.R."/>
            <person name="Barrell B.G."/>
            <person name="Parkhill J."/>
            <person name="Hopwood D.A."/>
        </authorList>
    </citation>
    <scope>NUCLEOTIDE SEQUENCE [LARGE SCALE GENOMIC DNA]</scope>
    <source>
        <strain>ATCC BAA-471 / A3(2) / M145</strain>
    </source>
</reference>
<evidence type="ECO:0000255" key="1">
    <source>
        <dbReference type="HAMAP-Rule" id="MF_00303"/>
    </source>
</evidence>
<evidence type="ECO:0000256" key="2">
    <source>
        <dbReference type="SAM" id="MobiDB-lite"/>
    </source>
</evidence>
<comment type="function">
    <text evidence="1">Involved in protein export. Acts as a chaperone by maintaining the newly synthesized protein in an open conformation. Functions as a peptidyl-prolyl cis-trans isomerase.</text>
</comment>
<comment type="catalytic activity">
    <reaction evidence="1">
        <text>[protein]-peptidylproline (omega=180) = [protein]-peptidylproline (omega=0)</text>
        <dbReference type="Rhea" id="RHEA:16237"/>
        <dbReference type="Rhea" id="RHEA-COMP:10747"/>
        <dbReference type="Rhea" id="RHEA-COMP:10748"/>
        <dbReference type="ChEBI" id="CHEBI:83833"/>
        <dbReference type="ChEBI" id="CHEBI:83834"/>
        <dbReference type="EC" id="5.2.1.8"/>
    </reaction>
</comment>
<comment type="subcellular location">
    <subcellularLocation>
        <location>Cytoplasm</location>
    </subcellularLocation>
    <text evidence="1">About half TF is bound to the ribosome near the polypeptide exit tunnel while the other half is free in the cytoplasm.</text>
</comment>
<comment type="domain">
    <text evidence="1">Consists of 3 domains; the N-terminus binds the ribosome, the middle domain has PPIase activity, while the C-terminus has intrinsic chaperone activity on its own.</text>
</comment>
<comment type="similarity">
    <text evidence="1">Belongs to the FKBP-type PPIase family. Tig subfamily.</text>
</comment>
<sequence>MKSAVETLNPTRVRLTVEVPFEELKDSLDAAYKKINQQVTVKGFRKGKIPARVIDQRFGRGAVLEEAVNDALPKFYTDAVNEAELNPLGQPEVDITELKDGETLNFTAEVDIRPSIEIPDYSGIEVEVDAVEVTDEDVEKSVEQLRERFASTSPVERAAADGDVLTLDLQAKVDGEILEDGVADGVSYTIGSGELLDGIDEAVKGLEAGGEATFTSELKGGSAAGKEAEVTVKVSQVAARELPELDDDFAQLASEFDTLEELQADSRKRLANMKQYDQATQAQERVLDKLLELVEVPVPEKLLEDEINTRKHNLEHHQLGQMGLDLEKYLELQGKTAEEFETETREAAVKGIKTQFVLDELVKQEKLNVSQEELTEHLMRRAASSGMSPDQFAQAVVEQGQVPLLVGEVARGKALAAVVEKATVKDTNGEIVDLDDEEDEETEAAEADATEAADAEKADDKAEEKTEG</sequence>
<dbReference type="EC" id="5.2.1.8" evidence="1"/>
<dbReference type="EMBL" id="AL939113">
    <property type="protein sequence ID" value="CAC09996.1"/>
    <property type="molecule type" value="Genomic_DNA"/>
</dbReference>
<dbReference type="RefSeq" id="NP_626856.1">
    <property type="nucleotide sequence ID" value="NC_003888.3"/>
</dbReference>
<dbReference type="RefSeq" id="WP_003976179.1">
    <property type="nucleotide sequence ID" value="NZ_VNID01000001.1"/>
</dbReference>
<dbReference type="SMR" id="Q9F314"/>
<dbReference type="FunCoup" id="Q9F314">
    <property type="interactions" value="291"/>
</dbReference>
<dbReference type="STRING" id="100226.gene:17760224"/>
<dbReference type="PaxDb" id="100226-SCO2620"/>
<dbReference type="GeneID" id="91386381"/>
<dbReference type="KEGG" id="sco:SCO2620"/>
<dbReference type="PATRIC" id="fig|100226.15.peg.2666"/>
<dbReference type="eggNOG" id="COG0544">
    <property type="taxonomic scope" value="Bacteria"/>
</dbReference>
<dbReference type="HOGENOM" id="CLU_033058_3_0_11"/>
<dbReference type="InParanoid" id="Q9F314"/>
<dbReference type="OrthoDB" id="9767721at2"/>
<dbReference type="PhylomeDB" id="Q9F314"/>
<dbReference type="Proteomes" id="UP000001973">
    <property type="component" value="Chromosome"/>
</dbReference>
<dbReference type="GO" id="GO:0005737">
    <property type="term" value="C:cytoplasm"/>
    <property type="evidence" value="ECO:0007669"/>
    <property type="project" value="UniProtKB-SubCell"/>
</dbReference>
<dbReference type="GO" id="GO:0003755">
    <property type="term" value="F:peptidyl-prolyl cis-trans isomerase activity"/>
    <property type="evidence" value="ECO:0000318"/>
    <property type="project" value="GO_Central"/>
</dbReference>
<dbReference type="GO" id="GO:0044183">
    <property type="term" value="F:protein folding chaperone"/>
    <property type="evidence" value="ECO:0000318"/>
    <property type="project" value="GO_Central"/>
</dbReference>
<dbReference type="GO" id="GO:0043022">
    <property type="term" value="F:ribosome binding"/>
    <property type="evidence" value="ECO:0000318"/>
    <property type="project" value="GO_Central"/>
</dbReference>
<dbReference type="GO" id="GO:0051083">
    <property type="term" value="P:'de novo' cotranslational protein folding"/>
    <property type="evidence" value="ECO:0000318"/>
    <property type="project" value="GO_Central"/>
</dbReference>
<dbReference type="GO" id="GO:0051301">
    <property type="term" value="P:cell division"/>
    <property type="evidence" value="ECO:0007669"/>
    <property type="project" value="UniProtKB-KW"/>
</dbReference>
<dbReference type="GO" id="GO:0061077">
    <property type="term" value="P:chaperone-mediated protein folding"/>
    <property type="evidence" value="ECO:0000318"/>
    <property type="project" value="GO_Central"/>
</dbReference>
<dbReference type="GO" id="GO:0015031">
    <property type="term" value="P:protein transport"/>
    <property type="evidence" value="ECO:0007669"/>
    <property type="project" value="UniProtKB-UniRule"/>
</dbReference>
<dbReference type="GO" id="GO:0043335">
    <property type="term" value="P:protein unfolding"/>
    <property type="evidence" value="ECO:0000318"/>
    <property type="project" value="GO_Central"/>
</dbReference>
<dbReference type="FunFam" id="3.10.50.40:FF:000019">
    <property type="entry name" value="Trigger factor"/>
    <property type="match status" value="1"/>
</dbReference>
<dbReference type="FunFam" id="3.30.70.1050:FF:000003">
    <property type="entry name" value="Trigger factor"/>
    <property type="match status" value="1"/>
</dbReference>
<dbReference type="Gene3D" id="3.10.50.40">
    <property type="match status" value="1"/>
</dbReference>
<dbReference type="Gene3D" id="3.30.70.1050">
    <property type="entry name" value="Trigger factor ribosome-binding domain"/>
    <property type="match status" value="1"/>
</dbReference>
<dbReference type="Gene3D" id="1.10.3120.10">
    <property type="entry name" value="Trigger factor, C-terminal domain"/>
    <property type="match status" value="1"/>
</dbReference>
<dbReference type="HAMAP" id="MF_00303">
    <property type="entry name" value="Trigger_factor_Tig"/>
    <property type="match status" value="1"/>
</dbReference>
<dbReference type="InterPro" id="IPR046357">
    <property type="entry name" value="PPIase_dom_sf"/>
</dbReference>
<dbReference type="InterPro" id="IPR001179">
    <property type="entry name" value="PPIase_FKBP_dom"/>
</dbReference>
<dbReference type="InterPro" id="IPR005215">
    <property type="entry name" value="Trig_fac"/>
</dbReference>
<dbReference type="InterPro" id="IPR008880">
    <property type="entry name" value="Trigger_fac_C"/>
</dbReference>
<dbReference type="InterPro" id="IPR037041">
    <property type="entry name" value="Trigger_fac_C_sf"/>
</dbReference>
<dbReference type="InterPro" id="IPR008881">
    <property type="entry name" value="Trigger_fac_ribosome-bd_bac"/>
</dbReference>
<dbReference type="InterPro" id="IPR036611">
    <property type="entry name" value="Trigger_fac_ribosome-bd_sf"/>
</dbReference>
<dbReference type="InterPro" id="IPR027304">
    <property type="entry name" value="Trigger_fact/SurA_dom_sf"/>
</dbReference>
<dbReference type="NCBIfam" id="TIGR00115">
    <property type="entry name" value="tig"/>
    <property type="match status" value="1"/>
</dbReference>
<dbReference type="PANTHER" id="PTHR30560">
    <property type="entry name" value="TRIGGER FACTOR CHAPERONE AND PEPTIDYL-PROLYL CIS/TRANS ISOMERASE"/>
    <property type="match status" value="1"/>
</dbReference>
<dbReference type="PANTHER" id="PTHR30560:SF3">
    <property type="entry name" value="TRIGGER FACTOR-LIKE PROTEIN TIG, CHLOROPLASTIC"/>
    <property type="match status" value="1"/>
</dbReference>
<dbReference type="Pfam" id="PF00254">
    <property type="entry name" value="FKBP_C"/>
    <property type="match status" value="1"/>
</dbReference>
<dbReference type="Pfam" id="PF05698">
    <property type="entry name" value="Trigger_C"/>
    <property type="match status" value="1"/>
</dbReference>
<dbReference type="Pfam" id="PF05697">
    <property type="entry name" value="Trigger_N"/>
    <property type="match status" value="1"/>
</dbReference>
<dbReference type="PIRSF" id="PIRSF003095">
    <property type="entry name" value="Trigger_factor"/>
    <property type="match status" value="1"/>
</dbReference>
<dbReference type="SUPFAM" id="SSF54534">
    <property type="entry name" value="FKBP-like"/>
    <property type="match status" value="1"/>
</dbReference>
<dbReference type="SUPFAM" id="SSF109998">
    <property type="entry name" value="Triger factor/SurA peptide-binding domain-like"/>
    <property type="match status" value="1"/>
</dbReference>
<dbReference type="SUPFAM" id="SSF102735">
    <property type="entry name" value="Trigger factor ribosome-binding domain"/>
    <property type="match status" value="1"/>
</dbReference>
<dbReference type="PROSITE" id="PS50059">
    <property type="entry name" value="FKBP_PPIASE"/>
    <property type="match status" value="1"/>
</dbReference>
<protein>
    <recommendedName>
        <fullName evidence="1">Trigger factor</fullName>
        <shortName evidence="1">TF</shortName>
        <ecNumber evidence="1">5.2.1.8</ecNumber>
    </recommendedName>
    <alternativeName>
        <fullName evidence="1">PPIase</fullName>
    </alternativeName>
</protein>
<proteinExistence type="inferred from homology"/>
<accession>Q9F314</accession>